<organism>
    <name type="scientific">Koribacter versatilis (strain Ellin345)</name>
    <dbReference type="NCBI Taxonomy" id="204669"/>
    <lineage>
        <taxon>Bacteria</taxon>
        <taxon>Pseudomonadati</taxon>
        <taxon>Acidobacteriota</taxon>
        <taxon>Terriglobia</taxon>
        <taxon>Terriglobales</taxon>
        <taxon>Candidatus Korobacteraceae</taxon>
        <taxon>Candidatus Korobacter</taxon>
    </lineage>
</organism>
<sequence>MGGFNLNEMMAAAKQHAEELQKKMAQTVIEATAGGGSVTVKMNGQKQLLSIKIDPEVVKSGDVEMLQDLVTAAVNEGSRRVDQAMQSNLSGMMGGMGLPGF</sequence>
<reference key="1">
    <citation type="journal article" date="2009" name="Appl. Environ. Microbiol.">
        <title>Three genomes from the phylum Acidobacteria provide insight into the lifestyles of these microorganisms in soils.</title>
        <authorList>
            <person name="Ward N.L."/>
            <person name="Challacombe J.F."/>
            <person name="Janssen P.H."/>
            <person name="Henrissat B."/>
            <person name="Coutinho P.M."/>
            <person name="Wu M."/>
            <person name="Xie G."/>
            <person name="Haft D.H."/>
            <person name="Sait M."/>
            <person name="Badger J."/>
            <person name="Barabote R.D."/>
            <person name="Bradley B."/>
            <person name="Brettin T.S."/>
            <person name="Brinkac L.M."/>
            <person name="Bruce D."/>
            <person name="Creasy T."/>
            <person name="Daugherty S.C."/>
            <person name="Davidsen T.M."/>
            <person name="DeBoy R.T."/>
            <person name="Detter J.C."/>
            <person name="Dodson R.J."/>
            <person name="Durkin A.S."/>
            <person name="Ganapathy A."/>
            <person name="Gwinn-Giglio M."/>
            <person name="Han C.S."/>
            <person name="Khouri H."/>
            <person name="Kiss H."/>
            <person name="Kothari S.P."/>
            <person name="Madupu R."/>
            <person name="Nelson K.E."/>
            <person name="Nelson W.C."/>
            <person name="Paulsen I."/>
            <person name="Penn K."/>
            <person name="Ren Q."/>
            <person name="Rosovitz M.J."/>
            <person name="Selengut J.D."/>
            <person name="Shrivastava S."/>
            <person name="Sullivan S.A."/>
            <person name="Tapia R."/>
            <person name="Thompson L.S."/>
            <person name="Watkins K.L."/>
            <person name="Yang Q."/>
            <person name="Yu C."/>
            <person name="Zafar N."/>
            <person name="Zhou L."/>
            <person name="Kuske C.R."/>
        </authorList>
    </citation>
    <scope>NUCLEOTIDE SEQUENCE [LARGE SCALE GENOMIC DNA]</scope>
    <source>
        <strain>Ellin345</strain>
    </source>
</reference>
<dbReference type="EMBL" id="CP000360">
    <property type="protein sequence ID" value="ABF40975.1"/>
    <property type="molecule type" value="Genomic_DNA"/>
</dbReference>
<dbReference type="RefSeq" id="WP_011522776.1">
    <property type="nucleotide sequence ID" value="NC_008009.1"/>
</dbReference>
<dbReference type="SMR" id="Q1IQ75"/>
<dbReference type="STRING" id="204669.Acid345_1974"/>
<dbReference type="EnsemblBacteria" id="ABF40975">
    <property type="protein sequence ID" value="ABF40975"/>
    <property type="gene ID" value="Acid345_1974"/>
</dbReference>
<dbReference type="KEGG" id="aba:Acid345_1974"/>
<dbReference type="eggNOG" id="COG0718">
    <property type="taxonomic scope" value="Bacteria"/>
</dbReference>
<dbReference type="HOGENOM" id="CLU_140930_2_1_0"/>
<dbReference type="OrthoDB" id="9795263at2"/>
<dbReference type="Proteomes" id="UP000002432">
    <property type="component" value="Chromosome"/>
</dbReference>
<dbReference type="GO" id="GO:0043590">
    <property type="term" value="C:bacterial nucleoid"/>
    <property type="evidence" value="ECO:0007669"/>
    <property type="project" value="UniProtKB-UniRule"/>
</dbReference>
<dbReference type="GO" id="GO:0005829">
    <property type="term" value="C:cytosol"/>
    <property type="evidence" value="ECO:0007669"/>
    <property type="project" value="TreeGrafter"/>
</dbReference>
<dbReference type="GO" id="GO:0003677">
    <property type="term" value="F:DNA binding"/>
    <property type="evidence" value="ECO:0007669"/>
    <property type="project" value="UniProtKB-UniRule"/>
</dbReference>
<dbReference type="Gene3D" id="3.30.1310.10">
    <property type="entry name" value="Nucleoid-associated protein YbaB-like domain"/>
    <property type="match status" value="1"/>
</dbReference>
<dbReference type="HAMAP" id="MF_00274">
    <property type="entry name" value="DNA_YbaB_EbfC"/>
    <property type="match status" value="1"/>
</dbReference>
<dbReference type="InterPro" id="IPR036894">
    <property type="entry name" value="YbaB-like_sf"/>
</dbReference>
<dbReference type="InterPro" id="IPR004401">
    <property type="entry name" value="YbaB/EbfC"/>
</dbReference>
<dbReference type="NCBIfam" id="TIGR00103">
    <property type="entry name" value="DNA_YbaB_EbfC"/>
    <property type="match status" value="1"/>
</dbReference>
<dbReference type="PANTHER" id="PTHR33449">
    <property type="entry name" value="NUCLEOID-ASSOCIATED PROTEIN YBAB"/>
    <property type="match status" value="1"/>
</dbReference>
<dbReference type="PANTHER" id="PTHR33449:SF1">
    <property type="entry name" value="NUCLEOID-ASSOCIATED PROTEIN YBAB"/>
    <property type="match status" value="1"/>
</dbReference>
<dbReference type="Pfam" id="PF02575">
    <property type="entry name" value="YbaB_DNA_bd"/>
    <property type="match status" value="1"/>
</dbReference>
<dbReference type="PIRSF" id="PIRSF004555">
    <property type="entry name" value="UCP004555"/>
    <property type="match status" value="1"/>
</dbReference>
<dbReference type="SUPFAM" id="SSF82607">
    <property type="entry name" value="YbaB-like"/>
    <property type="match status" value="1"/>
</dbReference>
<evidence type="ECO:0000255" key="1">
    <source>
        <dbReference type="HAMAP-Rule" id="MF_00274"/>
    </source>
</evidence>
<keyword id="KW-0963">Cytoplasm</keyword>
<keyword id="KW-0238">DNA-binding</keyword>
<keyword id="KW-1185">Reference proteome</keyword>
<accession>Q1IQ75</accession>
<protein>
    <recommendedName>
        <fullName evidence="1">Nucleoid-associated protein Acid345_1974</fullName>
    </recommendedName>
</protein>
<gene>
    <name type="ordered locus">Acid345_1974</name>
</gene>
<name>Y1974_KORVE</name>
<comment type="function">
    <text evidence="1">Binds to DNA and alters its conformation. May be involved in regulation of gene expression, nucleoid organization and DNA protection.</text>
</comment>
<comment type="subunit">
    <text evidence="1">Homodimer.</text>
</comment>
<comment type="subcellular location">
    <subcellularLocation>
        <location evidence="1">Cytoplasm</location>
        <location evidence="1">Nucleoid</location>
    </subcellularLocation>
</comment>
<comment type="similarity">
    <text evidence="1">Belongs to the YbaB/EbfC family.</text>
</comment>
<feature type="chain" id="PRO_1000071909" description="Nucleoid-associated protein Acid345_1974">
    <location>
        <begin position="1"/>
        <end position="101"/>
    </location>
</feature>
<proteinExistence type="inferred from homology"/>